<accession>Q2MF71</accession>
<feature type="chain" id="PRO_0000233020" description="L-glutamine:2-deoxy-scyllo-inosose aminotransferase">
    <location>
        <begin position="1"/>
        <end position="424"/>
    </location>
</feature>
<feature type="modified residue" description="N6-(pyridoxal phosphate)lysine" evidence="1">
    <location>
        <position position="202"/>
    </location>
</feature>
<name>GLDSA_STRLV</name>
<gene>
    <name type="primary">livS</name>
</gene>
<reference key="1">
    <citation type="submission" date="2004-06" db="EMBL/GenBank/DDBJ databases">
        <title>Analysis and comparison of biosynthetic gene clusters for the 2-deoxy-inosamine containing aminoglycoside antibiotics ribostamycin, neomycin, lividomycin, paromomycin and butirosin.</title>
        <authorList>
            <person name="Aboshanab K.M.A."/>
            <person name="Schmidt-Beissner H."/>
            <person name="Wehmeier U.F."/>
            <person name="Piepersberg W."/>
            <person name="Welzel K."/>
            <person name="Vente A."/>
        </authorList>
    </citation>
    <scope>NUCLEOTIDE SEQUENCE [GENOMIC DNA]</scope>
    <source>
        <strain>CBS 844.73</strain>
    </source>
</reference>
<protein>
    <recommendedName>
        <fullName>L-glutamine:2-deoxy-scyllo-inosose aminotransferase</fullName>
        <shortName>L-glutamine:DOI aminotransferase</shortName>
        <ecNumber evidence="2">2.6.1.100</ecNumber>
    </recommendedName>
    <alternativeName>
        <fullName>L-glutamine:3-amino-2,3-dideoxy-scyllo-inosose aminotransferase</fullName>
        <shortName>L-glutamine:amino-DOI aminotransferase</shortName>
        <ecNumber evidence="2">2.6.1.101</ecNumber>
    </alternativeName>
</protein>
<keyword id="KW-0032">Aminotransferase</keyword>
<keyword id="KW-0045">Antibiotic biosynthesis</keyword>
<keyword id="KW-0663">Pyridoxal phosphate</keyword>
<keyword id="KW-0808">Transferase</keyword>
<organism>
    <name type="scientific">Streptomyces lividus</name>
    <dbReference type="NCBI Taxonomy" id="282216"/>
    <lineage>
        <taxon>Bacteria</taxon>
        <taxon>Bacillati</taxon>
        <taxon>Actinomycetota</taxon>
        <taxon>Actinomycetes</taxon>
        <taxon>Kitasatosporales</taxon>
        <taxon>Streptomycetaceae</taxon>
        <taxon>Streptomyces</taxon>
    </lineage>
</organism>
<evidence type="ECO:0000250" key="1"/>
<evidence type="ECO:0000250" key="2">
    <source>
        <dbReference type="UniProtKB" id="Q6L739"/>
    </source>
</evidence>
<evidence type="ECO:0000305" key="3"/>
<proteinExistence type="inferred from homology"/>
<dbReference type="EC" id="2.6.1.100" evidence="2"/>
<dbReference type="EC" id="2.6.1.101" evidence="2"/>
<dbReference type="EMBL" id="AJ748832">
    <property type="protein sequence ID" value="CAG38696.1"/>
    <property type="molecule type" value="Genomic_DNA"/>
</dbReference>
<dbReference type="SMR" id="Q2MF71"/>
<dbReference type="UniPathway" id="UPA00907">
    <property type="reaction ID" value="UER00922"/>
</dbReference>
<dbReference type="UniPathway" id="UPA00968"/>
<dbReference type="GO" id="GO:0030170">
    <property type="term" value="F:pyridoxal phosphate binding"/>
    <property type="evidence" value="ECO:0007669"/>
    <property type="project" value="TreeGrafter"/>
</dbReference>
<dbReference type="GO" id="GO:0008483">
    <property type="term" value="F:transaminase activity"/>
    <property type="evidence" value="ECO:0007669"/>
    <property type="project" value="UniProtKB-KW"/>
</dbReference>
<dbReference type="GO" id="GO:0017000">
    <property type="term" value="P:antibiotic biosynthetic process"/>
    <property type="evidence" value="ECO:0007669"/>
    <property type="project" value="UniProtKB-KW"/>
</dbReference>
<dbReference type="GO" id="GO:0000271">
    <property type="term" value="P:polysaccharide biosynthetic process"/>
    <property type="evidence" value="ECO:0007669"/>
    <property type="project" value="TreeGrafter"/>
</dbReference>
<dbReference type="CDD" id="cd00616">
    <property type="entry name" value="AHBA_syn"/>
    <property type="match status" value="1"/>
</dbReference>
<dbReference type="Gene3D" id="3.90.1150.10">
    <property type="entry name" value="Aspartate Aminotransferase, domain 1"/>
    <property type="match status" value="1"/>
</dbReference>
<dbReference type="Gene3D" id="3.40.640.10">
    <property type="entry name" value="Type I PLP-dependent aspartate aminotransferase-like (Major domain)"/>
    <property type="match status" value="1"/>
</dbReference>
<dbReference type="InterPro" id="IPR000653">
    <property type="entry name" value="DegT/StrS_aminotransferase"/>
</dbReference>
<dbReference type="InterPro" id="IPR015424">
    <property type="entry name" value="PyrdxlP-dep_Trfase"/>
</dbReference>
<dbReference type="InterPro" id="IPR015421">
    <property type="entry name" value="PyrdxlP-dep_Trfase_major"/>
</dbReference>
<dbReference type="InterPro" id="IPR015422">
    <property type="entry name" value="PyrdxlP-dep_Trfase_small"/>
</dbReference>
<dbReference type="PANTHER" id="PTHR30244:SF34">
    <property type="entry name" value="DTDP-4-AMINO-4,6-DIDEOXYGALACTOSE TRANSAMINASE"/>
    <property type="match status" value="1"/>
</dbReference>
<dbReference type="PANTHER" id="PTHR30244">
    <property type="entry name" value="TRANSAMINASE"/>
    <property type="match status" value="1"/>
</dbReference>
<dbReference type="Pfam" id="PF01041">
    <property type="entry name" value="DegT_DnrJ_EryC1"/>
    <property type="match status" value="1"/>
</dbReference>
<dbReference type="PIRSF" id="PIRSF000390">
    <property type="entry name" value="PLP_StrS"/>
    <property type="match status" value="1"/>
</dbReference>
<dbReference type="SUPFAM" id="SSF53383">
    <property type="entry name" value="PLP-dependent transferases"/>
    <property type="match status" value="1"/>
</dbReference>
<sequence>MAQSLAVQGGSAVRTRPWPVWPRPAAGAAEAVQQVLSSGRWSISGPYRGAASQERRFARAFAEYNGVAHCVPAASGTASLMLALEACGVGAGDEVIVPGLSWVASGSTVLGVNAVPVFCDVDPRTLCLDPEAVEAAVTERTKAIVVVHLYSAVADMDALTALAERHSLPLIEDCAQAHGAAYRGVKVGALATAGTFSMQHSKMLTSGEGGAVITRDADFARRVEHLRADGRVLAGQRPGPGEMELVETGELMGNNRCLSEFQAALLTEQLKDLDAQHAIRRRNAALLDGLLRESGYVPQETSEGTSTRTHYTYAVRLPEGRLTHVGLATVARALSAELGCTVAPSYAPITRNRLYDPASRRRFALGVEHQALTDPKRFELPVAEDAARRVLTLHHAALLGAEDDMRDIAAAFGKVLRHGADLTA</sequence>
<comment type="function">
    <text evidence="2">Catalyzes the PLP-dependent transamination of 2-deoxy-scyllo-inosose (2-DOI) to form 2-deoxy-scyllo-inosamine (2-DOIA) using L-glutamine as the amino donor. Also catalyzes the transamination of 3-amino-2,3-dideoxy-scyllo-inosose (keto-2-DOIA) into 2-deoxystreptamine (2-DOS).</text>
</comment>
<comment type="catalytic activity">
    <reaction evidence="2">
        <text>2-deoxy-L-scyllo-inosose + L-glutamine = 2-deoxy-scyllo-inosamine + 2-oxoglutaramate</text>
        <dbReference type="Rhea" id="RHEA:34147"/>
        <dbReference type="ChEBI" id="CHEBI:16769"/>
        <dbReference type="ChEBI" id="CHEBI:58359"/>
        <dbReference type="ChEBI" id="CHEBI:64796"/>
        <dbReference type="ChEBI" id="CHEBI:65003"/>
        <dbReference type="EC" id="2.6.1.100"/>
    </reaction>
</comment>
<comment type="catalytic activity">
    <reaction evidence="2">
        <text>3-amino-2,3-dideoxy-scyllo-inosose + L-glutamine = 2-deoxystreptamine + 2-oxoglutaramate</text>
        <dbReference type="Rhea" id="RHEA:34151"/>
        <dbReference type="ChEBI" id="CHEBI:16769"/>
        <dbReference type="ChEBI" id="CHEBI:58359"/>
        <dbReference type="ChEBI" id="CHEBI:65002"/>
        <dbReference type="ChEBI" id="CHEBI:65069"/>
        <dbReference type="EC" id="2.6.1.101"/>
    </reaction>
</comment>
<comment type="cofactor">
    <cofactor evidence="1">
        <name>pyridoxal 5'-phosphate</name>
        <dbReference type="ChEBI" id="CHEBI:597326"/>
    </cofactor>
</comment>
<comment type="pathway">
    <text>Metabolic intermediate biosynthesis; 2-deoxystreptamine biosynthesis; 2-deoxystreptamine from D-glucose 6-phosphate: step 2/4.</text>
</comment>
<comment type="pathway">
    <text>Antibiotic biosynthesis; lividomycin biosynthesis.</text>
</comment>
<comment type="similarity">
    <text evidence="3">Belongs to the DegT/DnrJ/EryC1 family. L-glutamine:2-deoxy-scyllo-inosose/scyllo-inosose aminotransferase subfamily.</text>
</comment>